<protein>
    <recommendedName>
        <fullName evidence="1">Large ribosomal subunit protein bL34</fullName>
    </recommendedName>
    <alternativeName>
        <fullName evidence="3">50S ribosomal protein L34</fullName>
    </alternativeName>
</protein>
<gene>
    <name evidence="1" type="primary">rpmH</name>
    <name evidence="1" type="synonym">rpl34</name>
    <name type="ordered locus">P9515_13551</name>
</gene>
<accession>A2BXQ1</accession>
<feature type="chain" id="PRO_1000013401" description="Large ribosomal subunit protein bL34">
    <location>
        <begin position="1"/>
        <end position="45"/>
    </location>
</feature>
<feature type="region of interest" description="Disordered" evidence="2">
    <location>
        <begin position="1"/>
        <end position="45"/>
    </location>
</feature>
<feature type="compositionally biased region" description="Basic residues" evidence="2">
    <location>
        <begin position="10"/>
        <end position="45"/>
    </location>
</feature>
<keyword id="KW-0687">Ribonucleoprotein</keyword>
<keyword id="KW-0689">Ribosomal protein</keyword>
<comment type="similarity">
    <text evidence="1">Belongs to the bacterial ribosomal protein bL34 family.</text>
</comment>
<sequence>MTKRTFGGTSRKRKRVSGFRVRMRSHTGRRVIKSRRKRGRDRIAV</sequence>
<organism>
    <name type="scientific">Prochlorococcus marinus (strain MIT 9515)</name>
    <dbReference type="NCBI Taxonomy" id="167542"/>
    <lineage>
        <taxon>Bacteria</taxon>
        <taxon>Bacillati</taxon>
        <taxon>Cyanobacteriota</taxon>
        <taxon>Cyanophyceae</taxon>
        <taxon>Synechococcales</taxon>
        <taxon>Prochlorococcaceae</taxon>
        <taxon>Prochlorococcus</taxon>
    </lineage>
</organism>
<reference key="1">
    <citation type="journal article" date="2007" name="PLoS Genet.">
        <title>Patterns and implications of gene gain and loss in the evolution of Prochlorococcus.</title>
        <authorList>
            <person name="Kettler G.C."/>
            <person name="Martiny A.C."/>
            <person name="Huang K."/>
            <person name="Zucker J."/>
            <person name="Coleman M.L."/>
            <person name="Rodrigue S."/>
            <person name="Chen F."/>
            <person name="Lapidus A."/>
            <person name="Ferriera S."/>
            <person name="Johnson J."/>
            <person name="Steglich C."/>
            <person name="Church G.M."/>
            <person name="Richardson P."/>
            <person name="Chisholm S.W."/>
        </authorList>
    </citation>
    <scope>NUCLEOTIDE SEQUENCE [LARGE SCALE GENOMIC DNA]</scope>
    <source>
        <strain>MIT 9515</strain>
    </source>
</reference>
<dbReference type="EMBL" id="CP000552">
    <property type="protein sequence ID" value="ABM72562.1"/>
    <property type="molecule type" value="Genomic_DNA"/>
</dbReference>
<dbReference type="RefSeq" id="WP_011820659.1">
    <property type="nucleotide sequence ID" value="NC_008817.1"/>
</dbReference>
<dbReference type="SMR" id="A2BXQ1"/>
<dbReference type="STRING" id="167542.P9515_13551"/>
<dbReference type="GeneID" id="60200612"/>
<dbReference type="KEGG" id="pmc:P9515_13551"/>
<dbReference type="eggNOG" id="COG0230">
    <property type="taxonomic scope" value="Bacteria"/>
</dbReference>
<dbReference type="HOGENOM" id="CLU_129938_2_1_3"/>
<dbReference type="Proteomes" id="UP000001589">
    <property type="component" value="Chromosome"/>
</dbReference>
<dbReference type="GO" id="GO:1990904">
    <property type="term" value="C:ribonucleoprotein complex"/>
    <property type="evidence" value="ECO:0007669"/>
    <property type="project" value="UniProtKB-KW"/>
</dbReference>
<dbReference type="GO" id="GO:0005840">
    <property type="term" value="C:ribosome"/>
    <property type="evidence" value="ECO:0007669"/>
    <property type="project" value="UniProtKB-KW"/>
</dbReference>
<dbReference type="GO" id="GO:0003735">
    <property type="term" value="F:structural constituent of ribosome"/>
    <property type="evidence" value="ECO:0007669"/>
    <property type="project" value="InterPro"/>
</dbReference>
<dbReference type="GO" id="GO:0006412">
    <property type="term" value="P:translation"/>
    <property type="evidence" value="ECO:0007669"/>
    <property type="project" value="UniProtKB-UniRule"/>
</dbReference>
<dbReference type="Gene3D" id="1.10.287.3980">
    <property type="match status" value="1"/>
</dbReference>
<dbReference type="HAMAP" id="MF_00391">
    <property type="entry name" value="Ribosomal_bL34"/>
    <property type="match status" value="1"/>
</dbReference>
<dbReference type="InterPro" id="IPR000271">
    <property type="entry name" value="Ribosomal_bL34"/>
</dbReference>
<dbReference type="InterPro" id="IPR020939">
    <property type="entry name" value="Ribosomal_bL34_CS"/>
</dbReference>
<dbReference type="NCBIfam" id="TIGR01030">
    <property type="entry name" value="rpmH_bact"/>
    <property type="match status" value="1"/>
</dbReference>
<dbReference type="Pfam" id="PF00468">
    <property type="entry name" value="Ribosomal_L34"/>
    <property type="match status" value="1"/>
</dbReference>
<dbReference type="PROSITE" id="PS00784">
    <property type="entry name" value="RIBOSOMAL_L34"/>
    <property type="match status" value="1"/>
</dbReference>
<evidence type="ECO:0000255" key="1">
    <source>
        <dbReference type="HAMAP-Rule" id="MF_00391"/>
    </source>
</evidence>
<evidence type="ECO:0000256" key="2">
    <source>
        <dbReference type="SAM" id="MobiDB-lite"/>
    </source>
</evidence>
<evidence type="ECO:0000305" key="3"/>
<name>RL34_PROM5</name>
<proteinExistence type="inferred from homology"/>